<sequence length="346" mass="38059">MTYNIVALPGDGIGPEILSGTLELLELISKKYKFDYQLTSYDFGGAAIDSHGVPLPDDTLNACKNADAILLGAVGGPQWTDPNNRPEQGLLALRKSLGLFANIRPTKVTEGTSHFSPIKESRVKGTDFIIVRELTSGLYFGEPRHIDNQSALDSLTYTKKEIERIAMVAFELASQRKKKLTSVDKENVLATSKLWRKTINEISHEFPDVKVNHLLVDACSMQLISQPTNFDVIVTENLFGDILSDEASTIPGSLGLSPSASFSLEGPRLYEPIHGSAPDIANQNLANPFGMILSLAMCLRESFNFEDAASELEQAVYQLIKDGKTTKDLNGHYTTSDIFNELKKNY</sequence>
<comment type="function">
    <text evidence="1">Catalyzes the oxidation of 3-carboxy-2-hydroxy-4-methylpentanoate (3-isopropylmalate) to 3-carboxy-4-methyl-2-oxopentanoate. The product decarboxylates to 4-methyl-2 oxopentanoate.</text>
</comment>
<comment type="catalytic activity">
    <reaction evidence="1">
        <text>(2R,3S)-3-isopropylmalate + NAD(+) = 4-methyl-2-oxopentanoate + CO2 + NADH</text>
        <dbReference type="Rhea" id="RHEA:32271"/>
        <dbReference type="ChEBI" id="CHEBI:16526"/>
        <dbReference type="ChEBI" id="CHEBI:17865"/>
        <dbReference type="ChEBI" id="CHEBI:35121"/>
        <dbReference type="ChEBI" id="CHEBI:57540"/>
        <dbReference type="ChEBI" id="CHEBI:57945"/>
        <dbReference type="EC" id="1.1.1.85"/>
    </reaction>
</comment>
<comment type="cofactor">
    <cofactor evidence="1">
        <name>Mg(2+)</name>
        <dbReference type="ChEBI" id="CHEBI:18420"/>
    </cofactor>
    <cofactor evidence="1">
        <name>Mn(2+)</name>
        <dbReference type="ChEBI" id="CHEBI:29035"/>
    </cofactor>
    <text evidence="1">Binds 1 Mg(2+) or Mn(2+) ion per subunit.</text>
</comment>
<comment type="pathway">
    <text evidence="1">Amino-acid biosynthesis; L-leucine biosynthesis; L-leucine from 3-methyl-2-oxobutanoate: step 3/4.</text>
</comment>
<comment type="subunit">
    <text evidence="1">Homodimer.</text>
</comment>
<comment type="subcellular location">
    <subcellularLocation>
        <location evidence="1">Cytoplasm</location>
    </subcellularLocation>
</comment>
<comment type="similarity">
    <text evidence="1">Belongs to the isocitrate and isopropylmalate dehydrogenases family. LeuB type 1 subfamily.</text>
</comment>
<accession>Q4L7U1</accession>
<keyword id="KW-0028">Amino-acid biosynthesis</keyword>
<keyword id="KW-0100">Branched-chain amino acid biosynthesis</keyword>
<keyword id="KW-0963">Cytoplasm</keyword>
<keyword id="KW-0432">Leucine biosynthesis</keyword>
<keyword id="KW-0460">Magnesium</keyword>
<keyword id="KW-0464">Manganese</keyword>
<keyword id="KW-0479">Metal-binding</keyword>
<keyword id="KW-0520">NAD</keyword>
<keyword id="KW-0560">Oxidoreductase</keyword>
<name>LEU3_STAHJ</name>
<reference key="1">
    <citation type="journal article" date="2005" name="J. Bacteriol.">
        <title>Whole-genome sequencing of Staphylococcus haemolyticus uncovers the extreme plasticity of its genome and the evolution of human-colonizing staphylococcal species.</title>
        <authorList>
            <person name="Takeuchi F."/>
            <person name="Watanabe S."/>
            <person name="Baba T."/>
            <person name="Yuzawa H."/>
            <person name="Ito T."/>
            <person name="Morimoto Y."/>
            <person name="Kuroda M."/>
            <person name="Cui L."/>
            <person name="Takahashi M."/>
            <person name="Ankai A."/>
            <person name="Baba S."/>
            <person name="Fukui S."/>
            <person name="Lee J.C."/>
            <person name="Hiramatsu K."/>
        </authorList>
    </citation>
    <scope>NUCLEOTIDE SEQUENCE [LARGE SCALE GENOMIC DNA]</scope>
    <source>
        <strain>JCSC1435</strain>
    </source>
</reference>
<organism>
    <name type="scientific">Staphylococcus haemolyticus (strain JCSC1435)</name>
    <dbReference type="NCBI Taxonomy" id="279808"/>
    <lineage>
        <taxon>Bacteria</taxon>
        <taxon>Bacillati</taxon>
        <taxon>Bacillota</taxon>
        <taxon>Bacilli</taxon>
        <taxon>Bacillales</taxon>
        <taxon>Staphylococcaceae</taxon>
        <taxon>Staphylococcus</taxon>
    </lineage>
</organism>
<feature type="chain" id="PRO_0000083759" description="3-isopropylmalate dehydrogenase">
    <location>
        <begin position="1"/>
        <end position="346"/>
    </location>
</feature>
<feature type="binding site" evidence="1">
    <location>
        <begin position="76"/>
        <end position="87"/>
    </location>
    <ligand>
        <name>NAD(+)</name>
        <dbReference type="ChEBI" id="CHEBI:57540"/>
    </ligand>
</feature>
<feature type="binding site" evidence="1">
    <location>
        <position position="94"/>
    </location>
    <ligand>
        <name>substrate</name>
    </ligand>
</feature>
<feature type="binding site" evidence="1">
    <location>
        <position position="104"/>
    </location>
    <ligand>
        <name>substrate</name>
    </ligand>
</feature>
<feature type="binding site" evidence="1">
    <location>
        <position position="132"/>
    </location>
    <ligand>
        <name>substrate</name>
    </ligand>
</feature>
<feature type="binding site" evidence="1">
    <location>
        <position position="217"/>
    </location>
    <ligand>
        <name>Mg(2+)</name>
        <dbReference type="ChEBI" id="CHEBI:18420"/>
    </ligand>
</feature>
<feature type="binding site" evidence="1">
    <location>
        <position position="217"/>
    </location>
    <ligand>
        <name>substrate</name>
    </ligand>
</feature>
<feature type="binding site" evidence="1">
    <location>
        <position position="241"/>
    </location>
    <ligand>
        <name>Mg(2+)</name>
        <dbReference type="ChEBI" id="CHEBI:18420"/>
    </ligand>
</feature>
<feature type="binding site" evidence="1">
    <location>
        <position position="245"/>
    </location>
    <ligand>
        <name>Mg(2+)</name>
        <dbReference type="ChEBI" id="CHEBI:18420"/>
    </ligand>
</feature>
<feature type="binding site" evidence="1">
    <location>
        <begin position="275"/>
        <end position="287"/>
    </location>
    <ligand>
        <name>NAD(+)</name>
        <dbReference type="ChEBI" id="CHEBI:57540"/>
    </ligand>
</feature>
<feature type="site" description="Important for catalysis" evidence="1">
    <location>
        <position position="139"/>
    </location>
</feature>
<feature type="site" description="Important for catalysis" evidence="1">
    <location>
        <position position="185"/>
    </location>
</feature>
<evidence type="ECO:0000255" key="1">
    <source>
        <dbReference type="HAMAP-Rule" id="MF_01033"/>
    </source>
</evidence>
<proteinExistence type="inferred from homology"/>
<protein>
    <recommendedName>
        <fullName evidence="1">3-isopropylmalate dehydrogenase</fullName>
        <ecNumber evidence="1">1.1.1.85</ecNumber>
    </recommendedName>
    <alternativeName>
        <fullName evidence="1">3-IPM-DH</fullName>
    </alternativeName>
    <alternativeName>
        <fullName evidence="1">Beta-IPM dehydrogenase</fullName>
        <shortName evidence="1">IMDH</shortName>
    </alternativeName>
</protein>
<gene>
    <name evidence="1" type="primary">leuB</name>
    <name type="ordered locus">SH0975</name>
</gene>
<dbReference type="EC" id="1.1.1.85" evidence="1"/>
<dbReference type="EMBL" id="AP006716">
    <property type="protein sequence ID" value="BAE04284.1"/>
    <property type="molecule type" value="Genomic_DNA"/>
</dbReference>
<dbReference type="RefSeq" id="WP_011275283.1">
    <property type="nucleotide sequence ID" value="NC_007168.1"/>
</dbReference>
<dbReference type="SMR" id="Q4L7U1"/>
<dbReference type="GeneID" id="93780366"/>
<dbReference type="KEGG" id="sha:SH0975"/>
<dbReference type="eggNOG" id="COG0473">
    <property type="taxonomic scope" value="Bacteria"/>
</dbReference>
<dbReference type="HOGENOM" id="CLU_031953_0_3_9"/>
<dbReference type="OrthoDB" id="9806254at2"/>
<dbReference type="UniPathway" id="UPA00048">
    <property type="reaction ID" value="UER00072"/>
</dbReference>
<dbReference type="Proteomes" id="UP000000543">
    <property type="component" value="Chromosome"/>
</dbReference>
<dbReference type="GO" id="GO:0005829">
    <property type="term" value="C:cytosol"/>
    <property type="evidence" value="ECO:0007669"/>
    <property type="project" value="TreeGrafter"/>
</dbReference>
<dbReference type="GO" id="GO:0003862">
    <property type="term" value="F:3-isopropylmalate dehydrogenase activity"/>
    <property type="evidence" value="ECO:0007669"/>
    <property type="project" value="UniProtKB-UniRule"/>
</dbReference>
<dbReference type="GO" id="GO:0000287">
    <property type="term" value="F:magnesium ion binding"/>
    <property type="evidence" value="ECO:0007669"/>
    <property type="project" value="InterPro"/>
</dbReference>
<dbReference type="GO" id="GO:0051287">
    <property type="term" value="F:NAD binding"/>
    <property type="evidence" value="ECO:0007669"/>
    <property type="project" value="InterPro"/>
</dbReference>
<dbReference type="GO" id="GO:0009098">
    <property type="term" value="P:L-leucine biosynthetic process"/>
    <property type="evidence" value="ECO:0007669"/>
    <property type="project" value="UniProtKB-UniRule"/>
</dbReference>
<dbReference type="FunFam" id="3.40.718.10:FF:000006">
    <property type="entry name" value="3-isopropylmalate dehydrogenase"/>
    <property type="match status" value="1"/>
</dbReference>
<dbReference type="Gene3D" id="3.40.718.10">
    <property type="entry name" value="Isopropylmalate Dehydrogenase"/>
    <property type="match status" value="1"/>
</dbReference>
<dbReference type="HAMAP" id="MF_01033">
    <property type="entry name" value="LeuB_type1"/>
    <property type="match status" value="1"/>
</dbReference>
<dbReference type="InterPro" id="IPR019818">
    <property type="entry name" value="IsoCit/isopropylmalate_DH_CS"/>
</dbReference>
<dbReference type="InterPro" id="IPR024084">
    <property type="entry name" value="IsoPropMal-DH-like_dom"/>
</dbReference>
<dbReference type="InterPro" id="IPR004429">
    <property type="entry name" value="Isopropylmalate_DH"/>
</dbReference>
<dbReference type="NCBIfam" id="TIGR00169">
    <property type="entry name" value="leuB"/>
    <property type="match status" value="1"/>
</dbReference>
<dbReference type="PANTHER" id="PTHR42979">
    <property type="entry name" value="3-ISOPROPYLMALATE DEHYDROGENASE"/>
    <property type="match status" value="1"/>
</dbReference>
<dbReference type="PANTHER" id="PTHR42979:SF1">
    <property type="entry name" value="3-ISOPROPYLMALATE DEHYDROGENASE"/>
    <property type="match status" value="1"/>
</dbReference>
<dbReference type="Pfam" id="PF00180">
    <property type="entry name" value="Iso_dh"/>
    <property type="match status" value="1"/>
</dbReference>
<dbReference type="SMART" id="SM01329">
    <property type="entry name" value="Iso_dh"/>
    <property type="match status" value="1"/>
</dbReference>
<dbReference type="SUPFAM" id="SSF53659">
    <property type="entry name" value="Isocitrate/Isopropylmalate dehydrogenase-like"/>
    <property type="match status" value="1"/>
</dbReference>
<dbReference type="PROSITE" id="PS00470">
    <property type="entry name" value="IDH_IMDH"/>
    <property type="match status" value="1"/>
</dbReference>